<accession>Q5BFN9</accession>
<accession>C8VS13</accession>
<proteinExistence type="evidence at protein level"/>
<name>TCTP_EMENI</name>
<dbReference type="EMBL" id="AACD01000008">
    <property type="protein sequence ID" value="EAA65184.1"/>
    <property type="molecule type" value="Genomic_DNA"/>
</dbReference>
<dbReference type="EMBL" id="BN001308">
    <property type="protein sequence ID" value="CBF89077.1"/>
    <property type="molecule type" value="Genomic_DNA"/>
</dbReference>
<dbReference type="RefSeq" id="XP_658245.1">
    <property type="nucleotide sequence ID" value="XM_653153.1"/>
</dbReference>
<dbReference type="SMR" id="Q5BFN9"/>
<dbReference type="FunCoup" id="Q5BFN9">
    <property type="interactions" value="854"/>
</dbReference>
<dbReference type="STRING" id="227321.Q5BFN9"/>
<dbReference type="EnsemblFungi" id="CBF89077">
    <property type="protein sequence ID" value="CBF89077"/>
    <property type="gene ID" value="ANIA_00641"/>
</dbReference>
<dbReference type="KEGG" id="ani:ANIA_00641"/>
<dbReference type="VEuPathDB" id="FungiDB:AN0641"/>
<dbReference type="eggNOG" id="KOG1727">
    <property type="taxonomic scope" value="Eukaryota"/>
</dbReference>
<dbReference type="HOGENOM" id="CLU_095877_0_0_1"/>
<dbReference type="InParanoid" id="Q5BFN9"/>
<dbReference type="OMA" id="PYATVWA"/>
<dbReference type="OrthoDB" id="10248936at2759"/>
<dbReference type="Proteomes" id="UP000000560">
    <property type="component" value="Chromosome VIII"/>
</dbReference>
<dbReference type="GO" id="GO:0005737">
    <property type="term" value="C:cytoplasm"/>
    <property type="evidence" value="ECO:0000314"/>
    <property type="project" value="AspGD"/>
</dbReference>
<dbReference type="GO" id="GO:0005874">
    <property type="term" value="C:microtubule"/>
    <property type="evidence" value="ECO:0007669"/>
    <property type="project" value="UniProtKB-KW"/>
</dbReference>
<dbReference type="GO" id="GO:0005634">
    <property type="term" value="C:nucleus"/>
    <property type="evidence" value="ECO:0000314"/>
    <property type="project" value="AspGD"/>
</dbReference>
<dbReference type="GO" id="GO:0005509">
    <property type="term" value="F:calcium ion binding"/>
    <property type="evidence" value="ECO:0000318"/>
    <property type="project" value="GO_Central"/>
</dbReference>
<dbReference type="GO" id="GO:0071470">
    <property type="term" value="P:cellular response to osmotic stress"/>
    <property type="evidence" value="ECO:0000270"/>
    <property type="project" value="AspGD"/>
</dbReference>
<dbReference type="GO" id="GO:0043944">
    <property type="term" value="P:negative regulation of asexual sporulation resulting in formation of a cellular spore"/>
    <property type="evidence" value="ECO:0000315"/>
    <property type="project" value="AspGD"/>
</dbReference>
<dbReference type="GO" id="GO:0070798">
    <property type="term" value="P:positive regulation of cleistothecium development"/>
    <property type="evidence" value="ECO:0000315"/>
    <property type="project" value="AspGD"/>
</dbReference>
<dbReference type="GO" id="GO:0000909">
    <property type="term" value="P:sporocarp development involved in sexual reproduction"/>
    <property type="evidence" value="ECO:0000315"/>
    <property type="project" value="AspGD"/>
</dbReference>
<dbReference type="GO" id="GO:0006412">
    <property type="term" value="P:translation"/>
    <property type="evidence" value="ECO:0007669"/>
    <property type="project" value="UniProtKB-KW"/>
</dbReference>
<dbReference type="FunFam" id="2.170.150.10:FF:000009">
    <property type="entry name" value="Translationally-controlled tumor protein homolog"/>
    <property type="match status" value="1"/>
</dbReference>
<dbReference type="Gene3D" id="2.170.150.10">
    <property type="entry name" value="Metal Binding Protein, Guanine Nucleotide Exchange Factor, Chain A"/>
    <property type="match status" value="1"/>
</dbReference>
<dbReference type="InterPro" id="IPR011057">
    <property type="entry name" value="Mss4-like_sf"/>
</dbReference>
<dbReference type="InterPro" id="IPR011323">
    <property type="entry name" value="Mss4/transl-control_tumour"/>
</dbReference>
<dbReference type="InterPro" id="IPR034737">
    <property type="entry name" value="TCTP"/>
</dbReference>
<dbReference type="InterPro" id="IPR018103">
    <property type="entry name" value="Translation_control_tumour_CS"/>
</dbReference>
<dbReference type="InterPro" id="IPR018105">
    <property type="entry name" value="Translational_control_tumour_p"/>
</dbReference>
<dbReference type="PANTHER" id="PTHR11991">
    <property type="entry name" value="TRANSLATIONALLY CONTROLLED TUMOR PROTEIN-RELATED"/>
    <property type="match status" value="1"/>
</dbReference>
<dbReference type="PANTHER" id="PTHR11991:SF0">
    <property type="entry name" value="TRANSLATIONALLY-CONTROLLED TUMOR PROTEIN"/>
    <property type="match status" value="1"/>
</dbReference>
<dbReference type="Pfam" id="PF00838">
    <property type="entry name" value="TCTP"/>
    <property type="match status" value="1"/>
</dbReference>
<dbReference type="PRINTS" id="PR01653">
    <property type="entry name" value="TCTPROTEIN"/>
</dbReference>
<dbReference type="SUPFAM" id="SSF51316">
    <property type="entry name" value="Mss4-like"/>
    <property type="match status" value="1"/>
</dbReference>
<dbReference type="PROSITE" id="PS01002">
    <property type="entry name" value="TCTP_1"/>
    <property type="match status" value="1"/>
</dbReference>
<dbReference type="PROSITE" id="PS51797">
    <property type="entry name" value="TCTP_3"/>
    <property type="match status" value="1"/>
</dbReference>
<organism>
    <name type="scientific">Emericella nidulans (strain FGSC A4 / ATCC 38163 / CBS 112.46 / NRRL 194 / M139)</name>
    <name type="common">Aspergillus nidulans</name>
    <dbReference type="NCBI Taxonomy" id="227321"/>
    <lineage>
        <taxon>Eukaryota</taxon>
        <taxon>Fungi</taxon>
        <taxon>Dikarya</taxon>
        <taxon>Ascomycota</taxon>
        <taxon>Pezizomycotina</taxon>
        <taxon>Eurotiomycetes</taxon>
        <taxon>Eurotiomycetidae</taxon>
        <taxon>Eurotiales</taxon>
        <taxon>Aspergillaceae</taxon>
        <taxon>Aspergillus</taxon>
        <taxon>Aspergillus subgen. Nidulantes</taxon>
    </lineage>
</organism>
<reference key="1">
    <citation type="journal article" date="2005" name="Nature">
        <title>Sequencing of Aspergillus nidulans and comparative analysis with A. fumigatus and A. oryzae.</title>
        <authorList>
            <person name="Galagan J.E."/>
            <person name="Calvo S.E."/>
            <person name="Cuomo C."/>
            <person name="Ma L.-J."/>
            <person name="Wortman J.R."/>
            <person name="Batzoglou S."/>
            <person name="Lee S.-I."/>
            <person name="Bastuerkmen M."/>
            <person name="Spevak C.C."/>
            <person name="Clutterbuck J."/>
            <person name="Kapitonov V."/>
            <person name="Jurka J."/>
            <person name="Scazzocchio C."/>
            <person name="Farman M.L."/>
            <person name="Butler J."/>
            <person name="Purcell S."/>
            <person name="Harris S."/>
            <person name="Braus G.H."/>
            <person name="Draht O."/>
            <person name="Busch S."/>
            <person name="D'Enfert C."/>
            <person name="Bouchier C."/>
            <person name="Goldman G.H."/>
            <person name="Bell-Pedersen D."/>
            <person name="Griffiths-Jones S."/>
            <person name="Doonan J.H."/>
            <person name="Yu J."/>
            <person name="Vienken K."/>
            <person name="Pain A."/>
            <person name="Freitag M."/>
            <person name="Selker E.U."/>
            <person name="Archer D.B."/>
            <person name="Penalva M.A."/>
            <person name="Oakley B.R."/>
            <person name="Momany M."/>
            <person name="Tanaka T."/>
            <person name="Kumagai T."/>
            <person name="Asai K."/>
            <person name="Machida M."/>
            <person name="Nierman W.C."/>
            <person name="Denning D.W."/>
            <person name="Caddick M.X."/>
            <person name="Hynes M."/>
            <person name="Paoletti M."/>
            <person name="Fischer R."/>
            <person name="Miller B.L."/>
            <person name="Dyer P.S."/>
            <person name="Sachs M.S."/>
            <person name="Osmani S.A."/>
            <person name="Birren B.W."/>
        </authorList>
    </citation>
    <scope>NUCLEOTIDE SEQUENCE [LARGE SCALE GENOMIC DNA]</scope>
    <source>
        <strain>FGSC A4 / ATCC 38163 / CBS 112.46 / NRRL 194 / M139</strain>
    </source>
</reference>
<reference key="2">
    <citation type="journal article" date="2009" name="Fungal Genet. Biol.">
        <title>The 2008 update of the Aspergillus nidulans genome annotation: a community effort.</title>
        <authorList>
            <person name="Wortman J.R."/>
            <person name="Gilsenan J.M."/>
            <person name="Joardar V."/>
            <person name="Deegan J."/>
            <person name="Clutterbuck J."/>
            <person name="Andersen M.R."/>
            <person name="Archer D."/>
            <person name="Bencina M."/>
            <person name="Braus G."/>
            <person name="Coutinho P."/>
            <person name="von Dohren H."/>
            <person name="Doonan J."/>
            <person name="Driessen A.J."/>
            <person name="Durek P."/>
            <person name="Espeso E."/>
            <person name="Fekete E."/>
            <person name="Flipphi M."/>
            <person name="Estrada C.G."/>
            <person name="Geysens S."/>
            <person name="Goldman G."/>
            <person name="de Groot P.W."/>
            <person name="Hansen K."/>
            <person name="Harris S.D."/>
            <person name="Heinekamp T."/>
            <person name="Helmstaedt K."/>
            <person name="Henrissat B."/>
            <person name="Hofmann G."/>
            <person name="Homan T."/>
            <person name="Horio T."/>
            <person name="Horiuchi H."/>
            <person name="James S."/>
            <person name="Jones M."/>
            <person name="Karaffa L."/>
            <person name="Karanyi Z."/>
            <person name="Kato M."/>
            <person name="Keller N."/>
            <person name="Kelly D.E."/>
            <person name="Kiel J.A."/>
            <person name="Kim J.M."/>
            <person name="van der Klei I.J."/>
            <person name="Klis F.M."/>
            <person name="Kovalchuk A."/>
            <person name="Krasevec N."/>
            <person name="Kubicek C.P."/>
            <person name="Liu B."/>
            <person name="Maccabe A."/>
            <person name="Meyer V."/>
            <person name="Mirabito P."/>
            <person name="Miskei M."/>
            <person name="Mos M."/>
            <person name="Mullins J."/>
            <person name="Nelson D.R."/>
            <person name="Nielsen J."/>
            <person name="Oakley B.R."/>
            <person name="Osmani S.A."/>
            <person name="Pakula T."/>
            <person name="Paszewski A."/>
            <person name="Paulsen I."/>
            <person name="Pilsyk S."/>
            <person name="Pocsi I."/>
            <person name="Punt P.J."/>
            <person name="Ram A.F."/>
            <person name="Ren Q."/>
            <person name="Robellet X."/>
            <person name="Robson G."/>
            <person name="Seiboth B."/>
            <person name="van Solingen P."/>
            <person name="Specht T."/>
            <person name="Sun J."/>
            <person name="Taheri-Talesh N."/>
            <person name="Takeshita N."/>
            <person name="Ussery D."/>
            <person name="vanKuyk P.A."/>
            <person name="Visser H."/>
            <person name="van de Vondervoort P.J."/>
            <person name="de Vries R.P."/>
            <person name="Walton J."/>
            <person name="Xiang X."/>
            <person name="Xiong Y."/>
            <person name="Zeng A.P."/>
            <person name="Brandt B.W."/>
            <person name="Cornell M.J."/>
            <person name="van den Hondel C.A."/>
            <person name="Visser J."/>
            <person name="Oliver S.G."/>
            <person name="Turner G."/>
        </authorList>
    </citation>
    <scope>GENOME REANNOTATION</scope>
    <source>
        <strain>FGSC A4 / ATCC 38163 / CBS 112.46 / NRRL 194 / M139</strain>
    </source>
</reference>
<reference key="3">
    <citation type="journal article" date="2007" name="Fungal Genet. Biol.">
        <title>Proteome map of Aspergillus nidulans during osmoadaptation.</title>
        <authorList>
            <person name="Kim Y."/>
            <person name="Nandakumar M.P."/>
            <person name="Marten M.R."/>
        </authorList>
    </citation>
    <scope>INDUCTION</scope>
    <scope>IDENTIFICATION BY MASS SPECTROMETRY</scope>
</reference>
<comment type="function">
    <text evidence="1">Involved in protein synthesis. Involved in microtubule stabilization (By similarity). Involved in osmoadaptation.</text>
</comment>
<comment type="subcellular location">
    <subcellularLocation>
        <location evidence="1">Cytoplasm</location>
        <location evidence="1">Cytoskeleton</location>
    </subcellularLocation>
</comment>
<comment type="induction">
    <text evidence="3">Up-regulated when grown with elevated levels of potassium chloride.</text>
</comment>
<comment type="similarity">
    <text evidence="2">Belongs to the TCTP family.</text>
</comment>
<feature type="chain" id="PRO_0000252323" description="Translationally-controlled tumor protein homolog">
    <location>
        <begin position="1"/>
        <end position="179"/>
    </location>
</feature>
<feature type="domain" description="TCTP" evidence="2">
    <location>
        <begin position="1"/>
        <end position="179"/>
    </location>
</feature>
<keyword id="KW-0963">Cytoplasm</keyword>
<keyword id="KW-0206">Cytoskeleton</keyword>
<keyword id="KW-0493">Microtubule</keyword>
<keyword id="KW-0648">Protein biosynthesis</keyword>
<keyword id="KW-1185">Reference proteome</keyword>
<keyword id="KW-0346">Stress response</keyword>
<sequence>MIIYKDIISGDEVLSDTYNIKTVDGVLYECDCRKYLKKTNEDFELEGANPSAEGGDDEGGAEGGEVMVHDIEDQFRLVWLKAEDGAKPPKDAFKGHLKTYMKKVLKALQDKGAPDETINEFKKGAPAAVNKILKNYDNYDVLMGESMDGDAMHILIDFREDGVTPYATLWKHGLEEMKV</sequence>
<evidence type="ECO:0000250" key="1"/>
<evidence type="ECO:0000255" key="2">
    <source>
        <dbReference type="PROSITE-ProRule" id="PRU01133"/>
    </source>
</evidence>
<evidence type="ECO:0000269" key="3">
    <source>
    </source>
</evidence>
<gene>
    <name type="ORF">AN0641</name>
</gene>
<protein>
    <recommendedName>
        <fullName>Translationally-controlled tumor protein homolog</fullName>
        <shortName>TCTP</shortName>
    </recommendedName>
</protein>